<evidence type="ECO:0000250" key="1">
    <source>
        <dbReference type="UniProtKB" id="Q0UHZ9"/>
    </source>
</evidence>
<evidence type="ECO:0000255" key="2"/>
<evidence type="ECO:0000269" key="3">
    <source>
    </source>
</evidence>
<evidence type="ECO:0000303" key="4">
    <source>
    </source>
</evidence>
<evidence type="ECO:0000303" key="5">
    <source>
    </source>
</evidence>
<evidence type="ECO:0000305" key="6"/>
<evidence type="ECO:0000305" key="7">
    <source>
    </source>
</evidence>
<gene>
    <name evidence="5" type="primary">CTB10</name>
    <name type="ORF">CB0940_00843</name>
</gene>
<organism>
    <name type="scientific">Cercospora beticola</name>
    <name type="common">Sugarbeet leaf spot fungus</name>
    <dbReference type="NCBI Taxonomy" id="122368"/>
    <lineage>
        <taxon>Eukaryota</taxon>
        <taxon>Fungi</taxon>
        <taxon>Dikarya</taxon>
        <taxon>Ascomycota</taxon>
        <taxon>Pezizomycotina</taxon>
        <taxon>Dothideomycetes</taxon>
        <taxon>Dothideomycetidae</taxon>
        <taxon>Mycosphaerellales</taxon>
        <taxon>Mycosphaerellaceae</taxon>
        <taxon>Cercospora</taxon>
    </lineage>
</organism>
<sequence>MGSIGEPNRLLCWSIYVTKKPDQSEEDHHNHVSKVNAPMMIPFLKKYGIVRYTVKHNDAHSKPKQAALMAGQPEENVLAYDTVFEMIVKDIESIQTMQKDEEFLRTTIPDHFNFADMTRSKGSLTWIEEFTF</sequence>
<dbReference type="EC" id="1.-.-.-" evidence="7"/>
<dbReference type="EMBL" id="LKMD01000100">
    <property type="protein sequence ID" value="PIB01161.1"/>
    <property type="molecule type" value="Genomic_DNA"/>
</dbReference>
<dbReference type="RefSeq" id="XP_023458822.1">
    <property type="nucleotide sequence ID" value="XM_023593485.2"/>
</dbReference>
<dbReference type="SMR" id="A0A2G5I8P4"/>
<dbReference type="GeneID" id="35424655"/>
<dbReference type="OrthoDB" id="3183782at2759"/>
<dbReference type="Proteomes" id="UP000230605">
    <property type="component" value="Chromosome 1"/>
</dbReference>
<dbReference type="GO" id="GO:0004497">
    <property type="term" value="F:monooxygenase activity"/>
    <property type="evidence" value="ECO:0007669"/>
    <property type="project" value="UniProtKB-KW"/>
</dbReference>
<dbReference type="Gene3D" id="3.30.70.100">
    <property type="match status" value="1"/>
</dbReference>
<dbReference type="InterPro" id="IPR011008">
    <property type="entry name" value="Dimeric_a/b-barrel"/>
</dbReference>
<dbReference type="InterPro" id="IPR009799">
    <property type="entry name" value="EthD_dom"/>
</dbReference>
<dbReference type="Pfam" id="PF07110">
    <property type="entry name" value="EthD"/>
    <property type="match status" value="1"/>
</dbReference>
<dbReference type="SUPFAM" id="SSF54909">
    <property type="entry name" value="Dimeric alpha+beta barrel"/>
    <property type="match status" value="1"/>
</dbReference>
<protein>
    <recommendedName>
        <fullName evidence="5">Dehydratase CTB10</fullName>
        <ecNumber evidence="7">1.-.-.-</ecNumber>
    </recommendedName>
    <alternativeName>
        <fullName evidence="5">Cercosporin toxin biosynthesis cluster protein 10</fullName>
    </alternativeName>
</protein>
<feature type="chain" id="PRO_0000449876" description="Dehydratase CTB10">
    <location>
        <begin position="1"/>
        <end position="132"/>
    </location>
</feature>
<feature type="domain" description="EthD" evidence="2">
    <location>
        <begin position="21"/>
        <end position="117"/>
    </location>
</feature>
<comment type="function">
    <text evidence="1 3 4 7">Dehydratase; part of the gene cluster that mediates the biosynthesis of cercosporin, a light-activated, non-host-selective toxin (PubMed:29844193). The perylenequinone chromophore of cercosporin absorbs light energy to attain an electronically-activated triplet state and produces active oxygen species such as the hydroxyl radical, superoxide, hydrogen peroxide or singlet oxygen upon reaction with oxygen molecules (PubMed:11701851). These reactive oxygen species cause damage to various cellular components including lipids, proteins and nucleic acids (PubMed:11701851). The first step of cercosporin biosynthesis is performed by the polyketide synthase CTB1 which catalyzes the formation of nor-toralactone (Probable). The starter unit acyltransferase (SAT) domain of CTB1 initiates polyketide extension by the selective utilization of acetyl-CoA, which is elongated to the heptaketide in the beta-ketoacyl synthase (KS) domain by successive condensations with six malonyl units introduced by the malonyl acyltransferase (MAT) domain. The product template (PT) domain catalyzes C4-C9 and C2-C11 aldol cyclizations and dehydrations to a trihydroxynaphthalene, which is thought to be delivered to the thioesterase (TE) domain for product release (Probable). The bifunctional enzyme CTB3 then methylates nor-toralactone to toralactone before conducting an unusual oxidative aromatic ring opening (Probable). The O-methyltransferase CTB2 further methylates the nascent OH-6 of the CBT3 product, blocking further oxidation at this site before the reductase CTB6 reduces the 2-oxopropyl ketone at position C7, giving naphthalene (Probable). The FAD-dependent monooxygenase CTB5 in concert with the multicopper oxidase CTB12 are responsible for homodimerization of naphthalene with CTB7 installing the dioxepine moiety, finally producing cercosporin (Probable). The fasciclin domain-containing protein CTB11 might act with CTB5 and CTB12 whereas the roles of CTB9 and CTB10 have still to be elucidated (By similarity).</text>
</comment>
<comment type="pathway">
    <text evidence="3">Mycotoxin biosynthesis.</text>
</comment>
<comment type="disruption phenotype">
    <text evidence="3">Abolishes the production of cercosporin but accumulates a red, cercosporin-like metabolite called precercosporin.</text>
</comment>
<comment type="similarity">
    <text evidence="6">Belongs to the tpcK family.</text>
</comment>
<name>CTB10_CERBT</name>
<reference key="1">
    <citation type="journal article" date="2018" name="Proc. Natl. Acad. Sci. U.S.A.">
        <title>Gene cluster conservation provides insight into cercosporin biosynthesis and extends production to the genus Colletotrichum.</title>
        <authorList>
            <person name="de Jonge R."/>
            <person name="Ebert M.K."/>
            <person name="Huitt-Roehl C.R."/>
            <person name="Pal P."/>
            <person name="Suttle J.C."/>
            <person name="Spanner R.E."/>
            <person name="Neubauer J.D."/>
            <person name="Jurick W.M. II"/>
            <person name="Stott K.A."/>
            <person name="Secor G.A."/>
            <person name="Thomma B.P.H.J."/>
            <person name="Van de Peer Y."/>
            <person name="Townsend C.A."/>
            <person name="Bolton M.D."/>
        </authorList>
    </citation>
    <scope>NUCLEOTIDE SEQUENCE [LARGE SCALE GENOMIC DNA]</scope>
    <scope>FUNCTION</scope>
    <scope>DISRUPTION PHENOTYPE</scope>
    <scope>PATHWAY</scope>
    <source>
        <strain>09-40</strain>
    </source>
</reference>
<reference key="2">
    <citation type="journal article" date="2000" name="Annu. Rev. Phytopathol.">
        <title>The photoactivated cercospora toxin cercosporin: contributions to plant disease and fundamental biology.</title>
        <authorList>
            <person name="Daub M.E."/>
            <person name="Ehrenshaft M."/>
        </authorList>
    </citation>
    <scope>REVIEW ON CERCOSPORIN</scope>
</reference>
<keyword id="KW-0503">Monooxygenase</keyword>
<keyword id="KW-0560">Oxidoreductase</keyword>
<accession>A0A2G5I8P4</accession>
<proteinExistence type="inferred from homology"/>